<sequence length="317" mass="35358">MVVSLKGRDLLCLQDYTPEEIWTILETAKMLKIWQKIGKPHRLLEGKTLAMIFQKPSTRTRVSFEVAMAHLGGHALYLNAQDLQLRRGETIADTARVLSRYVDAIMARVYDHKDVEDLAKYASVPVINGLSDFSHPCQALADYMTIWEKKGTIKGVKVVYVGDGNNVAHSLMIAGTKLGADVVVATPEGYEPDEKVIKWAEQNAAESGGSFELLHDPVKAVKDADVIYTDVWASMGQEAEAEERRKIFRPFQVNKDLVKHAKPDYMFMHCLPAHRGEEVTDDVIDSPNSVVWDEAENRLHAQKAVLALLLGGVKTGF</sequence>
<dbReference type="EC" id="2.1.3.3" evidence="2"/>
<dbReference type="EMBL" id="AF083209">
    <property type="protein sequence ID" value="AAD09004.1"/>
    <property type="molecule type" value="Genomic_DNA"/>
</dbReference>
<dbReference type="EMBL" id="AJ248287">
    <property type="protein sequence ID" value="CAB50228.1"/>
    <property type="molecule type" value="Genomic_DNA"/>
</dbReference>
<dbReference type="EMBL" id="HE613800">
    <property type="protein sequence ID" value="CCE70765.1"/>
    <property type="molecule type" value="Genomic_DNA"/>
</dbReference>
<dbReference type="PIR" id="G75041">
    <property type="entry name" value="G75041"/>
</dbReference>
<dbReference type="RefSeq" id="WP_010868438.1">
    <property type="nucleotide sequence ID" value="NC_000868.1"/>
</dbReference>
<dbReference type="SMR" id="O93656"/>
<dbReference type="STRING" id="272844.PAB1502"/>
<dbReference type="KEGG" id="pab:PAB1502"/>
<dbReference type="PATRIC" id="fig|272844.11.peg.1408"/>
<dbReference type="eggNOG" id="arCOG00912">
    <property type="taxonomic scope" value="Archaea"/>
</dbReference>
<dbReference type="HOGENOM" id="CLU_043846_3_2_2"/>
<dbReference type="OrthoDB" id="4696at2157"/>
<dbReference type="PhylomeDB" id="O93656"/>
<dbReference type="BRENDA" id="2.1.3.3">
    <property type="organism ID" value="5242"/>
</dbReference>
<dbReference type="UniPathway" id="UPA00068">
    <property type="reaction ID" value="UER00112"/>
</dbReference>
<dbReference type="Proteomes" id="UP000000810">
    <property type="component" value="Chromosome"/>
</dbReference>
<dbReference type="Proteomes" id="UP000009139">
    <property type="component" value="Chromosome"/>
</dbReference>
<dbReference type="GO" id="GO:0005737">
    <property type="term" value="C:cytoplasm"/>
    <property type="evidence" value="ECO:0007669"/>
    <property type="project" value="UniProtKB-SubCell"/>
</dbReference>
<dbReference type="GO" id="GO:0016597">
    <property type="term" value="F:amino acid binding"/>
    <property type="evidence" value="ECO:0007669"/>
    <property type="project" value="InterPro"/>
</dbReference>
<dbReference type="GO" id="GO:0004585">
    <property type="term" value="F:ornithine carbamoyltransferase activity"/>
    <property type="evidence" value="ECO:0007669"/>
    <property type="project" value="UniProtKB-UniRule"/>
</dbReference>
<dbReference type="GO" id="GO:0042450">
    <property type="term" value="P:arginine biosynthetic process via ornithine"/>
    <property type="evidence" value="ECO:0007669"/>
    <property type="project" value="TreeGrafter"/>
</dbReference>
<dbReference type="GO" id="GO:0019240">
    <property type="term" value="P:citrulline biosynthetic process"/>
    <property type="evidence" value="ECO:0007669"/>
    <property type="project" value="TreeGrafter"/>
</dbReference>
<dbReference type="GO" id="GO:0006526">
    <property type="term" value="P:L-arginine biosynthetic process"/>
    <property type="evidence" value="ECO:0007669"/>
    <property type="project" value="UniProtKB-UniRule"/>
</dbReference>
<dbReference type="FunFam" id="3.40.50.1370:FF:000008">
    <property type="entry name" value="Ornithine carbamoyltransferase"/>
    <property type="match status" value="1"/>
</dbReference>
<dbReference type="FunFam" id="3.40.50.1370:FF:000016">
    <property type="entry name" value="Ornithine carbamoyltransferase"/>
    <property type="match status" value="1"/>
</dbReference>
<dbReference type="Gene3D" id="3.40.50.1370">
    <property type="entry name" value="Aspartate/ornithine carbamoyltransferase"/>
    <property type="match status" value="2"/>
</dbReference>
<dbReference type="HAMAP" id="MF_01109">
    <property type="entry name" value="OTCase"/>
    <property type="match status" value="1"/>
</dbReference>
<dbReference type="InterPro" id="IPR006132">
    <property type="entry name" value="Asp/Orn_carbamoyltranf_P-bd"/>
</dbReference>
<dbReference type="InterPro" id="IPR006130">
    <property type="entry name" value="Asp/Orn_carbamoylTrfase"/>
</dbReference>
<dbReference type="InterPro" id="IPR036901">
    <property type="entry name" value="Asp/Orn_carbamoylTrfase_sf"/>
</dbReference>
<dbReference type="InterPro" id="IPR006131">
    <property type="entry name" value="Asp_carbamoyltransf_Asp/Orn-bd"/>
</dbReference>
<dbReference type="InterPro" id="IPR002292">
    <property type="entry name" value="Orn/put_carbamltrans"/>
</dbReference>
<dbReference type="InterPro" id="IPR024904">
    <property type="entry name" value="OTCase_ArgI"/>
</dbReference>
<dbReference type="NCBIfam" id="TIGR00658">
    <property type="entry name" value="orni_carb_tr"/>
    <property type="match status" value="1"/>
</dbReference>
<dbReference type="NCBIfam" id="NF001986">
    <property type="entry name" value="PRK00779.1"/>
    <property type="match status" value="1"/>
</dbReference>
<dbReference type="PANTHER" id="PTHR45753">
    <property type="entry name" value="ORNITHINE CARBAMOYLTRANSFERASE, MITOCHONDRIAL"/>
    <property type="match status" value="1"/>
</dbReference>
<dbReference type="PANTHER" id="PTHR45753:SF3">
    <property type="entry name" value="ORNITHINE TRANSCARBAMYLASE, MITOCHONDRIAL"/>
    <property type="match status" value="1"/>
</dbReference>
<dbReference type="Pfam" id="PF00185">
    <property type="entry name" value="OTCace"/>
    <property type="match status" value="1"/>
</dbReference>
<dbReference type="Pfam" id="PF02729">
    <property type="entry name" value="OTCace_N"/>
    <property type="match status" value="1"/>
</dbReference>
<dbReference type="PRINTS" id="PR00100">
    <property type="entry name" value="AOTCASE"/>
</dbReference>
<dbReference type="PRINTS" id="PR00102">
    <property type="entry name" value="OTCASE"/>
</dbReference>
<dbReference type="SUPFAM" id="SSF53671">
    <property type="entry name" value="Aspartate/ornithine carbamoyltransferase"/>
    <property type="match status" value="1"/>
</dbReference>
<dbReference type="PROSITE" id="PS00097">
    <property type="entry name" value="CARBAMOYLTRANSFERASE"/>
    <property type="match status" value="1"/>
</dbReference>
<proteinExistence type="inferred from homology"/>
<keyword id="KW-0028">Amino-acid biosynthesis</keyword>
<keyword id="KW-0055">Arginine biosynthesis</keyword>
<keyword id="KW-0963">Cytoplasm</keyword>
<keyword id="KW-0808">Transferase</keyword>
<comment type="function">
    <text evidence="1">Reversibly catalyzes the transfer of the carbamoyl group from carbamoyl phosphate (CP) to the N(epsilon) atom of ornithine (ORN) to produce L-citrulline.</text>
</comment>
<comment type="catalytic activity">
    <reaction evidence="2">
        <text>carbamoyl phosphate + L-ornithine = L-citrulline + phosphate + H(+)</text>
        <dbReference type="Rhea" id="RHEA:19513"/>
        <dbReference type="ChEBI" id="CHEBI:15378"/>
        <dbReference type="ChEBI" id="CHEBI:43474"/>
        <dbReference type="ChEBI" id="CHEBI:46911"/>
        <dbReference type="ChEBI" id="CHEBI:57743"/>
        <dbReference type="ChEBI" id="CHEBI:58228"/>
        <dbReference type="EC" id="2.1.3.3"/>
    </reaction>
</comment>
<comment type="pathway">
    <text evidence="2">Amino-acid biosynthesis; L-arginine biosynthesis; L-arginine from L-ornithine and carbamoyl phosphate: step 1/3.</text>
</comment>
<comment type="subunit">
    <text evidence="1">Homododecamer.</text>
</comment>
<comment type="subcellular location">
    <subcellularLocation>
        <location evidence="2">Cytoplasm</location>
    </subcellularLocation>
</comment>
<comment type="similarity">
    <text evidence="2">Belongs to the aspartate/ornithine carbamoyltransferase superfamily. OTCase family.</text>
</comment>
<name>OTC_PYRAB</name>
<protein>
    <recommendedName>
        <fullName evidence="2">Ornithine carbamoyltransferase</fullName>
        <shortName evidence="2">OTCase</shortName>
        <ecNumber evidence="2">2.1.3.3</ecNumber>
    </recommendedName>
</protein>
<feature type="initiator methionine" description="Removed" evidence="1">
    <location>
        <position position="1"/>
    </location>
</feature>
<feature type="chain" id="PRO_0000113071" description="Ornithine carbamoyltransferase">
    <location>
        <begin position="2"/>
        <end position="317"/>
    </location>
</feature>
<feature type="binding site" evidence="2">
    <location>
        <begin position="57"/>
        <end position="60"/>
    </location>
    <ligand>
        <name>carbamoyl phosphate</name>
        <dbReference type="ChEBI" id="CHEBI:58228"/>
    </ligand>
</feature>
<feature type="binding site" evidence="2">
    <location>
        <position position="84"/>
    </location>
    <ligand>
        <name>carbamoyl phosphate</name>
        <dbReference type="ChEBI" id="CHEBI:58228"/>
    </ligand>
</feature>
<feature type="binding site" evidence="2">
    <location>
        <position position="108"/>
    </location>
    <ligand>
        <name>carbamoyl phosphate</name>
        <dbReference type="ChEBI" id="CHEBI:58228"/>
    </ligand>
</feature>
<feature type="binding site" evidence="2">
    <location>
        <begin position="135"/>
        <end position="138"/>
    </location>
    <ligand>
        <name>carbamoyl phosphate</name>
        <dbReference type="ChEBI" id="CHEBI:58228"/>
    </ligand>
</feature>
<feature type="binding site" evidence="2">
    <location>
        <position position="166"/>
    </location>
    <ligand>
        <name>L-ornithine</name>
        <dbReference type="ChEBI" id="CHEBI:46911"/>
    </ligand>
</feature>
<feature type="binding site" evidence="2">
    <location>
        <position position="230"/>
    </location>
    <ligand>
        <name>L-ornithine</name>
        <dbReference type="ChEBI" id="CHEBI:46911"/>
    </ligand>
</feature>
<feature type="binding site" evidence="2">
    <location>
        <begin position="234"/>
        <end position="235"/>
    </location>
    <ligand>
        <name>L-ornithine</name>
        <dbReference type="ChEBI" id="CHEBI:46911"/>
    </ligand>
</feature>
<feature type="binding site" evidence="2">
    <location>
        <begin position="270"/>
        <end position="271"/>
    </location>
    <ligand>
        <name>carbamoyl phosphate</name>
        <dbReference type="ChEBI" id="CHEBI:58228"/>
    </ligand>
</feature>
<feature type="binding site" evidence="2">
    <location>
        <position position="298"/>
    </location>
    <ligand>
        <name>carbamoyl phosphate</name>
        <dbReference type="ChEBI" id="CHEBI:58228"/>
    </ligand>
</feature>
<feature type="sequence conflict" description="In Ref. 1; AAD09004." evidence="3" ref="1">
    <original>S</original>
    <variation>R</variation>
    <location>
        <position position="63"/>
    </location>
</feature>
<feature type="sequence conflict" description="In Ref. 1; AAD09004." evidence="3" ref="1">
    <original>A</original>
    <variation>G</variation>
    <location>
        <position position="75"/>
    </location>
</feature>
<feature type="sequence conflict" description="In Ref. 1; AAD09004." evidence="3" ref="1">
    <original>V</original>
    <variation>I</variation>
    <location>
        <position position="159"/>
    </location>
</feature>
<feature type="sequence conflict" description="In Ref. 1; AAD09004." evidence="3" ref="1">
    <original>EQ</original>
    <variation>DE</variation>
    <location>
        <begin position="201"/>
        <end position="202"/>
    </location>
</feature>
<feature type="sequence conflict" description="In Ref. 1; AAD09004." evidence="3" ref="1">
    <original>D</original>
    <variation>S</variation>
    <location>
        <position position="264"/>
    </location>
</feature>
<feature type="sequence conflict" description="In Ref. 1." evidence="3" ref="1">
    <original>VKTG</original>
    <variation>RKDGLLT</variation>
    <location>
        <begin position="313"/>
        <end position="316"/>
    </location>
</feature>
<accession>O93656</accession>
<accession>G8ZHC8</accession>
<gene>
    <name evidence="2" type="primary">argF</name>
    <name type="ordered locus">PYRAB13230</name>
    <name type="ORF">PAB1502</name>
</gene>
<organism>
    <name type="scientific">Pyrococcus abyssi (strain GE5 / Orsay)</name>
    <dbReference type="NCBI Taxonomy" id="272844"/>
    <lineage>
        <taxon>Archaea</taxon>
        <taxon>Methanobacteriati</taxon>
        <taxon>Methanobacteriota</taxon>
        <taxon>Thermococci</taxon>
        <taxon>Thermococcales</taxon>
        <taxon>Thermococcaceae</taxon>
        <taxon>Pyrococcus</taxon>
    </lineage>
</organism>
<reference key="1">
    <citation type="submission" date="1998-08" db="EMBL/GenBank/DDBJ databases">
        <title>Ornithine carbamoyltransferase from Pyrococcus abyssi.</title>
        <authorList>
            <person name="Cunin R."/>
            <person name="Seumois G."/>
            <person name="Purcarea C."/>
            <person name="Van Vliet F."/>
            <person name="Legrain C."/>
        </authorList>
    </citation>
    <scope>NUCLEOTIDE SEQUENCE [GENOMIC DNA]</scope>
    <source>
        <strain>GE5 / Orsay</strain>
    </source>
</reference>
<reference key="2">
    <citation type="journal article" date="2003" name="Mol. Microbiol.">
        <title>An integrated analysis of the genome of the hyperthermophilic archaeon Pyrococcus abyssi.</title>
        <authorList>
            <person name="Cohen G.N."/>
            <person name="Barbe V."/>
            <person name="Flament D."/>
            <person name="Galperin M."/>
            <person name="Heilig R."/>
            <person name="Lecompte O."/>
            <person name="Poch O."/>
            <person name="Prieur D."/>
            <person name="Querellou J."/>
            <person name="Ripp R."/>
            <person name="Thierry J.-C."/>
            <person name="Van der Oost J."/>
            <person name="Weissenbach J."/>
            <person name="Zivanovic Y."/>
            <person name="Forterre P."/>
        </authorList>
    </citation>
    <scope>NUCLEOTIDE SEQUENCE [LARGE SCALE GENOMIC DNA]</scope>
    <source>
        <strain>GE5 / Orsay</strain>
    </source>
</reference>
<reference key="3">
    <citation type="journal article" date="2012" name="Curr. Microbiol.">
        <title>Re-annotation of two hyperthermophilic archaea Pyrococcus abyssi GE5 and Pyrococcus furiosus DSM 3638.</title>
        <authorList>
            <person name="Gao J."/>
            <person name="Wang J."/>
        </authorList>
    </citation>
    <scope>GENOME REANNOTATION</scope>
    <source>
        <strain>GE5 / Orsay</strain>
    </source>
</reference>
<evidence type="ECO:0000250" key="1"/>
<evidence type="ECO:0000255" key="2">
    <source>
        <dbReference type="HAMAP-Rule" id="MF_01109"/>
    </source>
</evidence>
<evidence type="ECO:0000305" key="3"/>